<reference key="1">
    <citation type="journal article" date="1999" name="Nature">
        <title>Sequence and analysis of chromosome 4 of the plant Arabidopsis thaliana.</title>
        <authorList>
            <person name="Mayer K.F.X."/>
            <person name="Schueller C."/>
            <person name="Wambutt R."/>
            <person name="Murphy G."/>
            <person name="Volckaert G."/>
            <person name="Pohl T."/>
            <person name="Duesterhoeft A."/>
            <person name="Stiekema W."/>
            <person name="Entian K.-D."/>
            <person name="Terryn N."/>
            <person name="Harris B."/>
            <person name="Ansorge W."/>
            <person name="Brandt P."/>
            <person name="Grivell L.A."/>
            <person name="Rieger M."/>
            <person name="Weichselgartner M."/>
            <person name="de Simone V."/>
            <person name="Obermaier B."/>
            <person name="Mache R."/>
            <person name="Mueller M."/>
            <person name="Kreis M."/>
            <person name="Delseny M."/>
            <person name="Puigdomenech P."/>
            <person name="Watson M."/>
            <person name="Schmidtheini T."/>
            <person name="Reichert B."/>
            <person name="Portetelle D."/>
            <person name="Perez-Alonso M."/>
            <person name="Boutry M."/>
            <person name="Bancroft I."/>
            <person name="Vos P."/>
            <person name="Hoheisel J."/>
            <person name="Zimmermann W."/>
            <person name="Wedler H."/>
            <person name="Ridley P."/>
            <person name="Langham S.-A."/>
            <person name="McCullagh B."/>
            <person name="Bilham L."/>
            <person name="Robben J."/>
            <person name="van der Schueren J."/>
            <person name="Grymonprez B."/>
            <person name="Chuang Y.-J."/>
            <person name="Vandenbussche F."/>
            <person name="Braeken M."/>
            <person name="Weltjens I."/>
            <person name="Voet M."/>
            <person name="Bastiaens I."/>
            <person name="Aert R."/>
            <person name="Defoor E."/>
            <person name="Weitzenegger T."/>
            <person name="Bothe G."/>
            <person name="Ramsperger U."/>
            <person name="Hilbert H."/>
            <person name="Braun M."/>
            <person name="Holzer E."/>
            <person name="Brandt A."/>
            <person name="Peters S."/>
            <person name="van Staveren M."/>
            <person name="Dirkse W."/>
            <person name="Mooijman P."/>
            <person name="Klein Lankhorst R."/>
            <person name="Rose M."/>
            <person name="Hauf J."/>
            <person name="Koetter P."/>
            <person name="Berneiser S."/>
            <person name="Hempel S."/>
            <person name="Feldpausch M."/>
            <person name="Lamberth S."/>
            <person name="Van den Daele H."/>
            <person name="De Keyser A."/>
            <person name="Buysshaert C."/>
            <person name="Gielen J."/>
            <person name="Villarroel R."/>
            <person name="De Clercq R."/>
            <person name="van Montagu M."/>
            <person name="Rogers J."/>
            <person name="Cronin A."/>
            <person name="Quail M.A."/>
            <person name="Bray-Allen S."/>
            <person name="Clark L."/>
            <person name="Doggett J."/>
            <person name="Hall S."/>
            <person name="Kay M."/>
            <person name="Lennard N."/>
            <person name="McLay K."/>
            <person name="Mayes R."/>
            <person name="Pettett A."/>
            <person name="Rajandream M.A."/>
            <person name="Lyne M."/>
            <person name="Benes V."/>
            <person name="Rechmann S."/>
            <person name="Borkova D."/>
            <person name="Bloecker H."/>
            <person name="Scharfe M."/>
            <person name="Grimm M."/>
            <person name="Loehnert T.-H."/>
            <person name="Dose S."/>
            <person name="de Haan M."/>
            <person name="Maarse A.C."/>
            <person name="Schaefer M."/>
            <person name="Mueller-Auer S."/>
            <person name="Gabel C."/>
            <person name="Fuchs M."/>
            <person name="Fartmann B."/>
            <person name="Granderath K."/>
            <person name="Dauner D."/>
            <person name="Herzl A."/>
            <person name="Neumann S."/>
            <person name="Argiriou A."/>
            <person name="Vitale D."/>
            <person name="Liguori R."/>
            <person name="Piravandi E."/>
            <person name="Massenet O."/>
            <person name="Quigley F."/>
            <person name="Clabauld G."/>
            <person name="Muendlein A."/>
            <person name="Felber R."/>
            <person name="Schnabl S."/>
            <person name="Hiller R."/>
            <person name="Schmidt W."/>
            <person name="Lecharny A."/>
            <person name="Aubourg S."/>
            <person name="Chefdor F."/>
            <person name="Cooke R."/>
            <person name="Berger C."/>
            <person name="Monfort A."/>
            <person name="Casacuberta E."/>
            <person name="Gibbons T."/>
            <person name="Weber N."/>
            <person name="Vandenbol M."/>
            <person name="Bargues M."/>
            <person name="Terol J."/>
            <person name="Torres A."/>
            <person name="Perez-Perez A."/>
            <person name="Purnelle B."/>
            <person name="Bent E."/>
            <person name="Johnson S."/>
            <person name="Tacon D."/>
            <person name="Jesse T."/>
            <person name="Heijnen L."/>
            <person name="Schwarz S."/>
            <person name="Scholler P."/>
            <person name="Heber S."/>
            <person name="Francs P."/>
            <person name="Bielke C."/>
            <person name="Frishman D."/>
            <person name="Haase D."/>
            <person name="Lemcke K."/>
            <person name="Mewes H.-W."/>
            <person name="Stocker S."/>
            <person name="Zaccaria P."/>
            <person name="Bevan M."/>
            <person name="Wilson R.K."/>
            <person name="de la Bastide M."/>
            <person name="Habermann K."/>
            <person name="Parnell L."/>
            <person name="Dedhia N."/>
            <person name="Gnoj L."/>
            <person name="Schutz K."/>
            <person name="Huang E."/>
            <person name="Spiegel L."/>
            <person name="Sekhon M."/>
            <person name="Murray J."/>
            <person name="Sheet P."/>
            <person name="Cordes M."/>
            <person name="Abu-Threideh J."/>
            <person name="Stoneking T."/>
            <person name="Kalicki J."/>
            <person name="Graves T."/>
            <person name="Harmon G."/>
            <person name="Edwards J."/>
            <person name="Latreille P."/>
            <person name="Courtney L."/>
            <person name="Cloud J."/>
            <person name="Abbott A."/>
            <person name="Scott K."/>
            <person name="Johnson D."/>
            <person name="Minx P."/>
            <person name="Bentley D."/>
            <person name="Fulton B."/>
            <person name="Miller N."/>
            <person name="Greco T."/>
            <person name="Kemp K."/>
            <person name="Kramer J."/>
            <person name="Fulton L."/>
            <person name="Mardis E."/>
            <person name="Dante M."/>
            <person name="Pepin K."/>
            <person name="Hillier L.W."/>
            <person name="Nelson J."/>
            <person name="Spieth J."/>
            <person name="Ryan E."/>
            <person name="Andrews S."/>
            <person name="Geisel C."/>
            <person name="Layman D."/>
            <person name="Du H."/>
            <person name="Ali J."/>
            <person name="Berghoff A."/>
            <person name="Jones K."/>
            <person name="Drone K."/>
            <person name="Cotton M."/>
            <person name="Joshu C."/>
            <person name="Antonoiu B."/>
            <person name="Zidanic M."/>
            <person name="Strong C."/>
            <person name="Sun H."/>
            <person name="Lamar B."/>
            <person name="Yordan C."/>
            <person name="Ma P."/>
            <person name="Zhong J."/>
            <person name="Preston R."/>
            <person name="Vil D."/>
            <person name="Shekher M."/>
            <person name="Matero A."/>
            <person name="Shah R."/>
            <person name="Swaby I.K."/>
            <person name="O'Shaughnessy A."/>
            <person name="Rodriguez M."/>
            <person name="Hoffman J."/>
            <person name="Till S."/>
            <person name="Granat S."/>
            <person name="Shohdy N."/>
            <person name="Hasegawa A."/>
            <person name="Hameed A."/>
            <person name="Lodhi M."/>
            <person name="Johnson A."/>
            <person name="Chen E."/>
            <person name="Marra M.A."/>
            <person name="Martienssen R."/>
            <person name="McCombie W.R."/>
        </authorList>
    </citation>
    <scope>NUCLEOTIDE SEQUENCE [LARGE SCALE GENOMIC DNA]</scope>
    <source>
        <strain>cv. Columbia</strain>
    </source>
</reference>
<reference key="2">
    <citation type="journal article" date="2017" name="Plant J.">
        <title>Araport11: a complete reannotation of the Arabidopsis thaliana reference genome.</title>
        <authorList>
            <person name="Cheng C.Y."/>
            <person name="Krishnakumar V."/>
            <person name="Chan A.P."/>
            <person name="Thibaud-Nissen F."/>
            <person name="Schobel S."/>
            <person name="Town C.D."/>
        </authorList>
    </citation>
    <scope>GENOME REANNOTATION</scope>
    <source>
        <strain>cv. Columbia</strain>
    </source>
</reference>
<reference key="3">
    <citation type="journal article" date="2006" name="Plant Physiol.">
        <title>Production of reactive oxygen species by plant NADPH oxidases.</title>
        <authorList>
            <person name="Sagi M."/>
            <person name="Fluhr R."/>
        </authorList>
    </citation>
    <scope>GENE FAMILY</scope>
    <scope>NOMENCLATURE</scope>
</reference>
<evidence type="ECO:0000250" key="1"/>
<evidence type="ECO:0000250" key="2">
    <source>
        <dbReference type="UniProtKB" id="Q9FIJ0"/>
    </source>
</evidence>
<evidence type="ECO:0000255" key="3"/>
<evidence type="ECO:0000255" key="4">
    <source>
        <dbReference type="PROSITE-ProRule" id="PRU00716"/>
    </source>
</evidence>
<evidence type="ECO:0000256" key="5">
    <source>
        <dbReference type="SAM" id="MobiDB-lite"/>
    </source>
</evidence>
<evidence type="ECO:0000305" key="6"/>
<sequence length="941" mass="106952">MSMSFSGGTHNDRWGSDLASAGEFTQSFPSLPATYSPSPSSSSSSGEELLEVTIEFPSGVIINIDSVTGTGTDISGTDLEITSCSDSGSGSRSLSLGWSASSERLTAGTNSKQQIQKISRRGYGYSSRSAPEPVVPHRGEITDSVNLPRALSQRPTRPNRDGSGTERAIHGLKFISSKENGIVDWNDVQNNFAHLSKDGYLFKSDFAHCIGLENENSKEFADELFDALCRRRRIMVDKINLQELYEFWYQITDESFDSRLQIFFNMVKNGDGRITENEVKEIIILSASANNLSRLRERAEEYAALIMEELAPDGLYSQYIELKDLEILLLEKDISHSYSLPFSQTSRALSQNLKDRRWRMSRNLLYSLQDNWKRIWVLTLWFVIMAWLFMWKCYQYKHKDAFHVMGYCLVMAKGAAETLKFNMALILLPVCRNTITYLRSTALSHSVPFDDCINFHKTISVAIISAMLLHATSHLACDFPRILASTDTDYKRYLVKYFGVTRPTYFGLVNTPVGITGIIMVAFMLIAFTLASRRCRRNLTKLPKPFDKLTGYNAFWYSHHLLLTVYVLLVIHGVSLYLEHKWYRKTVWMYLAVPVLLYVGERIFRFFRSRLYTVEICKVVIYPGNVVVLRMSKPTSFDYKSGQYVFVQCPSVSKFEWHPFSITSSPGDDYLSIHIRQRGDWTEGIKKAFSVVCHAPEAGKSGLLRADVPNQRSFPELLIDGPYGAPAQDHWKYDVVLLVGLGIGATPFVSILRDLLNNIIKQQEQAECISGSCSNSNISSDHSFSCLNSEAASRIPQTQRKTLNTKNAYFYWVTREQGSFDWFKEIMNEIADSDRKGVIEMHNYLTSVYEEGDTRSNLLTMIQTLNHAKNGVDIFSGTKVRTHFGRPKWKKVLSKISTKHRNARIGVFYCGVPSLGKELSTLCHEFNQTGITRFDFHKEQF</sequence>
<feature type="chain" id="PRO_0000313761" description="Probable respiratory burst oxidase homolog protein I">
    <location>
        <begin position="1"/>
        <end position="941"/>
    </location>
</feature>
<feature type="topological domain" description="Cytoplasmic" evidence="3">
    <location>
        <begin position="1"/>
        <end position="374"/>
    </location>
</feature>
<feature type="transmembrane region" description="Helical; Name=1" evidence="3">
    <location>
        <begin position="375"/>
        <end position="395"/>
    </location>
</feature>
<feature type="topological domain" description="Extracellular" evidence="3">
    <location>
        <begin position="396"/>
        <end position="407"/>
    </location>
</feature>
<feature type="transmembrane region" description="Helical; Name=2" evidence="3">
    <location>
        <begin position="408"/>
        <end position="428"/>
    </location>
</feature>
<feature type="topological domain" description="Cytoplasmic" evidence="3">
    <location>
        <begin position="429"/>
        <end position="514"/>
    </location>
</feature>
<feature type="transmembrane region" description="Helical; Name=3" evidence="3">
    <location>
        <begin position="515"/>
        <end position="535"/>
    </location>
</feature>
<feature type="topological domain" description="Extracellular" evidence="3">
    <location>
        <begin position="536"/>
        <end position="557"/>
    </location>
</feature>
<feature type="transmembrane region" description="Helical; Name=4" evidence="3">
    <location>
        <begin position="558"/>
        <end position="578"/>
    </location>
</feature>
<feature type="topological domain" description="Cytoplasmic" evidence="3">
    <location>
        <begin position="579"/>
        <end position="586"/>
    </location>
</feature>
<feature type="transmembrane region" description="Helical; Name=5" evidence="3">
    <location>
        <begin position="587"/>
        <end position="604"/>
    </location>
</feature>
<feature type="topological domain" description="Extracellular" evidence="3">
    <location>
        <begin position="605"/>
        <end position="731"/>
    </location>
</feature>
<feature type="transmembrane region" description="Helical; Name=6" evidence="1">
    <location>
        <begin position="732"/>
        <end position="752"/>
    </location>
</feature>
<feature type="topological domain" description="Cytoplasmic" evidence="3">
    <location>
        <begin position="753"/>
        <end position="941"/>
    </location>
</feature>
<feature type="domain" description="EF-hand">
    <location>
        <begin position="254"/>
        <end position="289"/>
    </location>
</feature>
<feature type="domain" description="Ferric oxidoreductase">
    <location>
        <begin position="413"/>
        <end position="570"/>
    </location>
</feature>
<feature type="domain" description="FAD-binding FR-type" evidence="4">
    <location>
        <begin position="609"/>
        <end position="729"/>
    </location>
</feature>
<feature type="region of interest" description="Disordered" evidence="5">
    <location>
        <begin position="29"/>
        <end position="48"/>
    </location>
</feature>
<feature type="region of interest" description="Disordered" evidence="5">
    <location>
        <begin position="103"/>
        <end position="166"/>
    </location>
</feature>
<feature type="region of interest" description="EF-hand-like 1" evidence="1">
    <location>
        <begin position="196"/>
        <end position="204"/>
    </location>
</feature>
<feature type="region of interest" description="EF-hand-like 2" evidence="1">
    <location>
        <begin position="232"/>
        <end position="243"/>
    </location>
</feature>
<feature type="compositionally biased region" description="Low complexity" evidence="5">
    <location>
        <begin position="36"/>
        <end position="45"/>
    </location>
</feature>
<feature type="compositionally biased region" description="Polar residues" evidence="5">
    <location>
        <begin position="103"/>
        <end position="117"/>
    </location>
</feature>
<feature type="binding site" evidence="1">
    <location>
        <position position="269"/>
    </location>
    <ligand>
        <name>Ca(2+)</name>
        <dbReference type="ChEBI" id="CHEBI:29108"/>
    </ligand>
</feature>
<feature type="binding site" evidence="1">
    <location>
        <position position="271"/>
    </location>
    <ligand>
        <name>Ca(2+)</name>
        <dbReference type="ChEBI" id="CHEBI:29108"/>
    </ligand>
</feature>
<feature type="binding site" evidence="1">
    <location>
        <position position="273"/>
    </location>
    <ligand>
        <name>Ca(2+)</name>
        <dbReference type="ChEBI" id="CHEBI:29108"/>
    </ligand>
</feature>
<feature type="binding site" evidence="1">
    <location>
        <position position="278"/>
    </location>
    <ligand>
        <name>Ca(2+)</name>
        <dbReference type="ChEBI" id="CHEBI:29108"/>
    </ligand>
</feature>
<feature type="modified residue" description="Phosphoserine" evidence="2">
    <location>
        <position position="346"/>
    </location>
</feature>
<feature type="modified residue" description="Phosphoserine" evidence="2">
    <location>
        <position position="350"/>
    </location>
</feature>
<name>RBOHI_ARATH</name>
<gene>
    <name type="primary">RBOHI</name>
    <name type="ordered locus">At4g11230</name>
    <name type="ORF">F8L21.20</name>
</gene>
<dbReference type="EC" id="1.11.1.-"/>
<dbReference type="EC" id="1.6.3.-"/>
<dbReference type="EMBL" id="AL096882">
    <property type="protein sequence ID" value="CAB51407.1"/>
    <property type="status" value="ALT_SEQ"/>
    <property type="molecule type" value="Genomic_DNA"/>
</dbReference>
<dbReference type="EMBL" id="AL161531">
    <property type="protein sequence ID" value="CAB81224.1"/>
    <property type="status" value="ALT_SEQ"/>
    <property type="molecule type" value="Genomic_DNA"/>
</dbReference>
<dbReference type="EMBL" id="CP002687">
    <property type="protein sequence ID" value="AEE82987.1"/>
    <property type="molecule type" value="Genomic_DNA"/>
</dbReference>
<dbReference type="PIR" id="T13014">
    <property type="entry name" value="T13014"/>
</dbReference>
<dbReference type="RefSeq" id="NP_192862.2">
    <property type="nucleotide sequence ID" value="NM_117194.4"/>
</dbReference>
<dbReference type="SMR" id="Q9SUT8"/>
<dbReference type="FunCoup" id="Q9SUT8">
    <property type="interactions" value="537"/>
</dbReference>
<dbReference type="STRING" id="3702.Q9SUT8"/>
<dbReference type="PeroxiBase" id="3288">
    <property type="entry name" value="AtRboh09"/>
</dbReference>
<dbReference type="iPTMnet" id="Q9SUT8"/>
<dbReference type="PaxDb" id="3702-AT4G11230.1"/>
<dbReference type="EnsemblPlants" id="AT4G11230.1">
    <property type="protein sequence ID" value="AT4G11230.1"/>
    <property type="gene ID" value="AT4G11230"/>
</dbReference>
<dbReference type="GeneID" id="826725"/>
<dbReference type="Gramene" id="AT4G11230.1">
    <property type="protein sequence ID" value="AT4G11230.1"/>
    <property type="gene ID" value="AT4G11230"/>
</dbReference>
<dbReference type="KEGG" id="ath:AT4G11230"/>
<dbReference type="Araport" id="AT4G11230"/>
<dbReference type="TAIR" id="AT4G11230">
    <property type="gene designation" value="RBOHI"/>
</dbReference>
<dbReference type="eggNOG" id="KOG0039">
    <property type="taxonomic scope" value="Eukaryota"/>
</dbReference>
<dbReference type="HOGENOM" id="CLU_005646_6_0_1"/>
<dbReference type="InParanoid" id="Q9SUT8"/>
<dbReference type="OMA" id="HSFSCLN"/>
<dbReference type="PhylomeDB" id="Q9SUT8"/>
<dbReference type="BioCyc" id="ARA:AT4G11230-MONOMER"/>
<dbReference type="PRO" id="PR:Q9SUT8"/>
<dbReference type="Proteomes" id="UP000006548">
    <property type="component" value="Chromosome 4"/>
</dbReference>
<dbReference type="ExpressionAtlas" id="Q9SUT8">
    <property type="expression patterns" value="baseline and differential"/>
</dbReference>
<dbReference type="GO" id="GO:0016020">
    <property type="term" value="C:membrane"/>
    <property type="evidence" value="ECO:0007669"/>
    <property type="project" value="UniProtKB-SubCell"/>
</dbReference>
<dbReference type="GO" id="GO:0046872">
    <property type="term" value="F:metal ion binding"/>
    <property type="evidence" value="ECO:0007669"/>
    <property type="project" value="UniProtKB-KW"/>
</dbReference>
<dbReference type="GO" id="GO:0050664">
    <property type="term" value="F:oxidoreductase activity, acting on NAD(P)H, oxygen as acceptor"/>
    <property type="evidence" value="ECO:0007669"/>
    <property type="project" value="InterPro"/>
</dbReference>
<dbReference type="GO" id="GO:0004601">
    <property type="term" value="F:peroxidase activity"/>
    <property type="evidence" value="ECO:0007669"/>
    <property type="project" value="UniProtKB-KW"/>
</dbReference>
<dbReference type="GO" id="GO:0006970">
    <property type="term" value="P:response to osmotic stress"/>
    <property type="evidence" value="ECO:0000315"/>
    <property type="project" value="TAIR"/>
</dbReference>
<dbReference type="CDD" id="cd06186">
    <property type="entry name" value="NOX_Duox_like_FAD_NADP"/>
    <property type="match status" value="1"/>
</dbReference>
<dbReference type="FunFam" id="1.10.238.10:FF:000049">
    <property type="entry name" value="Respiratory burst oxidase homolog A"/>
    <property type="match status" value="1"/>
</dbReference>
<dbReference type="FunFam" id="2.40.30.10:FF:000120">
    <property type="entry name" value="Respiratory burst oxidase homolog protein C"/>
    <property type="match status" value="1"/>
</dbReference>
<dbReference type="FunFam" id="3.40.50.80:FF:000007">
    <property type="entry name" value="Respiratory burst oxidase protein A"/>
    <property type="match status" value="1"/>
</dbReference>
<dbReference type="Gene3D" id="1.10.238.10">
    <property type="entry name" value="EF-hand"/>
    <property type="match status" value="1"/>
</dbReference>
<dbReference type="Gene3D" id="3.40.50.80">
    <property type="entry name" value="Nucleotide-binding domain of ferredoxin-NADP reductase (FNR) module"/>
    <property type="match status" value="1"/>
</dbReference>
<dbReference type="Gene3D" id="2.40.30.10">
    <property type="entry name" value="Translation factors"/>
    <property type="match status" value="1"/>
</dbReference>
<dbReference type="InterPro" id="IPR000778">
    <property type="entry name" value="Cyt_b245_heavy_chain"/>
</dbReference>
<dbReference type="InterPro" id="IPR011992">
    <property type="entry name" value="EF-hand-dom_pair"/>
</dbReference>
<dbReference type="InterPro" id="IPR013112">
    <property type="entry name" value="FAD-bd_8"/>
</dbReference>
<dbReference type="InterPro" id="IPR017927">
    <property type="entry name" value="FAD-bd_FR_type"/>
</dbReference>
<dbReference type="InterPro" id="IPR013130">
    <property type="entry name" value="Fe3_Rdtase_TM_dom"/>
</dbReference>
<dbReference type="InterPro" id="IPR013121">
    <property type="entry name" value="Fe_red_NAD-bd_6"/>
</dbReference>
<dbReference type="InterPro" id="IPR039261">
    <property type="entry name" value="FNR_nucleotide-bd"/>
</dbReference>
<dbReference type="InterPro" id="IPR013623">
    <property type="entry name" value="NADPH_Ox"/>
</dbReference>
<dbReference type="InterPro" id="IPR050369">
    <property type="entry name" value="RBOH/FRE"/>
</dbReference>
<dbReference type="InterPro" id="IPR017938">
    <property type="entry name" value="Riboflavin_synthase-like_b-brl"/>
</dbReference>
<dbReference type="PANTHER" id="PTHR11972">
    <property type="entry name" value="NADPH OXIDASE"/>
    <property type="match status" value="1"/>
</dbReference>
<dbReference type="PANTHER" id="PTHR11972:SF150">
    <property type="entry name" value="RESPIRATORY BURST OXIDASE HOMOLOG PROTEIN I-RELATED"/>
    <property type="match status" value="1"/>
</dbReference>
<dbReference type="Pfam" id="PF08022">
    <property type="entry name" value="FAD_binding_8"/>
    <property type="match status" value="1"/>
</dbReference>
<dbReference type="Pfam" id="PF01794">
    <property type="entry name" value="Ferric_reduct"/>
    <property type="match status" value="1"/>
</dbReference>
<dbReference type="Pfam" id="PF08030">
    <property type="entry name" value="NAD_binding_6"/>
    <property type="match status" value="1"/>
</dbReference>
<dbReference type="Pfam" id="PF08414">
    <property type="entry name" value="NADPH_Ox"/>
    <property type="match status" value="1"/>
</dbReference>
<dbReference type="PRINTS" id="PR00466">
    <property type="entry name" value="GP91PHOX"/>
</dbReference>
<dbReference type="SFLD" id="SFLDS00052">
    <property type="entry name" value="Ferric_Reductase_Domain"/>
    <property type="match status" value="1"/>
</dbReference>
<dbReference type="SFLD" id="SFLDG01168">
    <property type="entry name" value="Ferric_reductase_subgroup_(FRE"/>
    <property type="match status" value="1"/>
</dbReference>
<dbReference type="SFLD" id="SFLDG01169">
    <property type="entry name" value="NADPH_oxidase_subgroup_(NOX)"/>
    <property type="match status" value="1"/>
</dbReference>
<dbReference type="SUPFAM" id="SSF47473">
    <property type="entry name" value="EF-hand"/>
    <property type="match status" value="1"/>
</dbReference>
<dbReference type="SUPFAM" id="SSF52343">
    <property type="entry name" value="Ferredoxin reductase-like, C-terminal NADP-linked domain"/>
    <property type="match status" value="1"/>
</dbReference>
<dbReference type="SUPFAM" id="SSF63380">
    <property type="entry name" value="Riboflavin synthase domain-like"/>
    <property type="match status" value="1"/>
</dbReference>
<dbReference type="PROSITE" id="PS51384">
    <property type="entry name" value="FAD_FR"/>
    <property type="match status" value="1"/>
</dbReference>
<organism>
    <name type="scientific">Arabidopsis thaliana</name>
    <name type="common">Mouse-ear cress</name>
    <dbReference type="NCBI Taxonomy" id="3702"/>
    <lineage>
        <taxon>Eukaryota</taxon>
        <taxon>Viridiplantae</taxon>
        <taxon>Streptophyta</taxon>
        <taxon>Embryophyta</taxon>
        <taxon>Tracheophyta</taxon>
        <taxon>Spermatophyta</taxon>
        <taxon>Magnoliopsida</taxon>
        <taxon>eudicotyledons</taxon>
        <taxon>Gunneridae</taxon>
        <taxon>Pentapetalae</taxon>
        <taxon>rosids</taxon>
        <taxon>malvids</taxon>
        <taxon>Brassicales</taxon>
        <taxon>Brassicaceae</taxon>
        <taxon>Camelineae</taxon>
        <taxon>Arabidopsis</taxon>
    </lineage>
</organism>
<accession>Q9SUT8</accession>
<protein>
    <recommendedName>
        <fullName>Probable respiratory burst oxidase homolog protein I</fullName>
        <ecNumber>1.11.1.-</ecNumber>
        <ecNumber>1.6.3.-</ecNumber>
    </recommendedName>
    <alternativeName>
        <fullName>NADPH oxidase RBOHI</fullName>
        <shortName>AtRBOHI</shortName>
    </alternativeName>
</protein>
<proteinExistence type="inferred from homology"/>
<comment type="function">
    <text>Calcium-dependent NADPH oxidase that generates superoxide.</text>
</comment>
<comment type="subunit">
    <text evidence="1">Monomer and homodimer.</text>
</comment>
<comment type="subcellular location">
    <subcellularLocation>
        <location evidence="6">Membrane</location>
        <topology evidence="6">Multi-pass membrane protein</topology>
    </subcellularLocation>
</comment>
<comment type="similarity">
    <text evidence="6">Belongs to the RBOH (TC 5.B.1.3) family.</text>
</comment>
<comment type="sequence caution" evidence="6">
    <conflict type="erroneous gene model prediction">
        <sequence resource="EMBL-CDS" id="CAB51407"/>
    </conflict>
</comment>
<comment type="sequence caution" evidence="6">
    <conflict type="erroneous gene model prediction">
        <sequence resource="EMBL-CDS" id="CAB81224"/>
    </conflict>
</comment>
<keyword id="KW-0106">Calcium</keyword>
<keyword id="KW-0274">FAD</keyword>
<keyword id="KW-0285">Flavoprotein</keyword>
<keyword id="KW-0472">Membrane</keyword>
<keyword id="KW-0479">Metal-binding</keyword>
<keyword id="KW-0521">NADP</keyword>
<keyword id="KW-0560">Oxidoreductase</keyword>
<keyword id="KW-0575">Peroxidase</keyword>
<keyword id="KW-0597">Phosphoprotein</keyword>
<keyword id="KW-1185">Reference proteome</keyword>
<keyword id="KW-0677">Repeat</keyword>
<keyword id="KW-0812">Transmembrane</keyword>
<keyword id="KW-1133">Transmembrane helix</keyword>